<dbReference type="EC" id="1.1.1.86" evidence="1"/>
<dbReference type="EMBL" id="CP000667">
    <property type="protein sequence ID" value="ABP53705.1"/>
    <property type="molecule type" value="Genomic_DNA"/>
</dbReference>
<dbReference type="RefSeq" id="WP_011905137.1">
    <property type="nucleotide sequence ID" value="NC_009380.1"/>
</dbReference>
<dbReference type="SMR" id="A4X4A5"/>
<dbReference type="STRING" id="369723.Strop_1235"/>
<dbReference type="KEGG" id="stp:Strop_1235"/>
<dbReference type="PATRIC" id="fig|369723.5.peg.1258"/>
<dbReference type="eggNOG" id="COG0059">
    <property type="taxonomic scope" value="Bacteria"/>
</dbReference>
<dbReference type="HOGENOM" id="CLU_033821_0_1_11"/>
<dbReference type="UniPathway" id="UPA00047">
    <property type="reaction ID" value="UER00056"/>
</dbReference>
<dbReference type="UniPathway" id="UPA00049">
    <property type="reaction ID" value="UER00060"/>
</dbReference>
<dbReference type="Proteomes" id="UP000000235">
    <property type="component" value="Chromosome"/>
</dbReference>
<dbReference type="GO" id="GO:0005829">
    <property type="term" value="C:cytosol"/>
    <property type="evidence" value="ECO:0007669"/>
    <property type="project" value="TreeGrafter"/>
</dbReference>
<dbReference type="GO" id="GO:0004455">
    <property type="term" value="F:ketol-acid reductoisomerase activity"/>
    <property type="evidence" value="ECO:0007669"/>
    <property type="project" value="UniProtKB-UniRule"/>
</dbReference>
<dbReference type="GO" id="GO:0000287">
    <property type="term" value="F:magnesium ion binding"/>
    <property type="evidence" value="ECO:0007669"/>
    <property type="project" value="UniProtKB-UniRule"/>
</dbReference>
<dbReference type="GO" id="GO:0050661">
    <property type="term" value="F:NADP binding"/>
    <property type="evidence" value="ECO:0007669"/>
    <property type="project" value="InterPro"/>
</dbReference>
<dbReference type="GO" id="GO:0009097">
    <property type="term" value="P:isoleucine biosynthetic process"/>
    <property type="evidence" value="ECO:0007669"/>
    <property type="project" value="UniProtKB-UniRule"/>
</dbReference>
<dbReference type="GO" id="GO:0009099">
    <property type="term" value="P:L-valine biosynthetic process"/>
    <property type="evidence" value="ECO:0007669"/>
    <property type="project" value="UniProtKB-UniRule"/>
</dbReference>
<dbReference type="FunFam" id="3.40.50.720:FF:000023">
    <property type="entry name" value="Ketol-acid reductoisomerase (NADP(+))"/>
    <property type="match status" value="1"/>
</dbReference>
<dbReference type="Gene3D" id="6.10.240.10">
    <property type="match status" value="1"/>
</dbReference>
<dbReference type="Gene3D" id="3.40.50.720">
    <property type="entry name" value="NAD(P)-binding Rossmann-like Domain"/>
    <property type="match status" value="1"/>
</dbReference>
<dbReference type="HAMAP" id="MF_00435">
    <property type="entry name" value="IlvC"/>
    <property type="match status" value="1"/>
</dbReference>
<dbReference type="InterPro" id="IPR008927">
    <property type="entry name" value="6-PGluconate_DH-like_C_sf"/>
</dbReference>
<dbReference type="InterPro" id="IPR013023">
    <property type="entry name" value="KARI"/>
</dbReference>
<dbReference type="InterPro" id="IPR000506">
    <property type="entry name" value="KARI_C"/>
</dbReference>
<dbReference type="InterPro" id="IPR013116">
    <property type="entry name" value="KARI_N"/>
</dbReference>
<dbReference type="InterPro" id="IPR014359">
    <property type="entry name" value="KARI_prok"/>
</dbReference>
<dbReference type="InterPro" id="IPR036291">
    <property type="entry name" value="NAD(P)-bd_dom_sf"/>
</dbReference>
<dbReference type="NCBIfam" id="TIGR00465">
    <property type="entry name" value="ilvC"/>
    <property type="match status" value="1"/>
</dbReference>
<dbReference type="NCBIfam" id="NF004017">
    <property type="entry name" value="PRK05479.1"/>
    <property type="match status" value="1"/>
</dbReference>
<dbReference type="NCBIfam" id="NF009940">
    <property type="entry name" value="PRK13403.1"/>
    <property type="match status" value="1"/>
</dbReference>
<dbReference type="PANTHER" id="PTHR21371">
    <property type="entry name" value="KETOL-ACID REDUCTOISOMERASE, MITOCHONDRIAL"/>
    <property type="match status" value="1"/>
</dbReference>
<dbReference type="PANTHER" id="PTHR21371:SF1">
    <property type="entry name" value="KETOL-ACID REDUCTOISOMERASE, MITOCHONDRIAL"/>
    <property type="match status" value="1"/>
</dbReference>
<dbReference type="Pfam" id="PF01450">
    <property type="entry name" value="KARI_C"/>
    <property type="match status" value="1"/>
</dbReference>
<dbReference type="Pfam" id="PF07991">
    <property type="entry name" value="KARI_N"/>
    <property type="match status" value="1"/>
</dbReference>
<dbReference type="PIRSF" id="PIRSF000116">
    <property type="entry name" value="IlvC_gammaproteo"/>
    <property type="match status" value="1"/>
</dbReference>
<dbReference type="SUPFAM" id="SSF48179">
    <property type="entry name" value="6-phosphogluconate dehydrogenase C-terminal domain-like"/>
    <property type="match status" value="1"/>
</dbReference>
<dbReference type="SUPFAM" id="SSF51735">
    <property type="entry name" value="NAD(P)-binding Rossmann-fold domains"/>
    <property type="match status" value="1"/>
</dbReference>
<dbReference type="PROSITE" id="PS51851">
    <property type="entry name" value="KARI_C"/>
    <property type="match status" value="1"/>
</dbReference>
<dbReference type="PROSITE" id="PS51850">
    <property type="entry name" value="KARI_N"/>
    <property type="match status" value="1"/>
</dbReference>
<sequence length="337" mass="35902">MSVEVFYDDDADLGLIQGRTVAVIGYGSQGHAHALSLRDSGVAVVIGLPAGSKSRPKAEEQGLRVLTPAEAAAEADIIMILAPDTAQRALYTDSIAPHLTAGKALLFGHGFNIRYGLITPPVDVDVAMIAPKGPGHLVRRQYVDGKGVPCLVAVEQDASGSALGLALAYAKAIGGTRAGVIKTTFTEETETDLFGEQAVLCGGAAALVQTGFEVLTEAGYAPEVAYFECLHELKLIVDLMYEGGIARMRYSISDTAEYGDLSRGPRVIDSQVKERMRAVLGEIQSGEFAREWVAEDEAGRPNFAKWRAEGAAHPIEETGGRLRAMMSWVDRPITETA</sequence>
<accession>A4X4A5</accession>
<evidence type="ECO:0000255" key="1">
    <source>
        <dbReference type="HAMAP-Rule" id="MF_00435"/>
    </source>
</evidence>
<evidence type="ECO:0000255" key="2">
    <source>
        <dbReference type="PROSITE-ProRule" id="PRU01197"/>
    </source>
</evidence>
<evidence type="ECO:0000255" key="3">
    <source>
        <dbReference type="PROSITE-ProRule" id="PRU01198"/>
    </source>
</evidence>
<gene>
    <name evidence="1" type="primary">ilvC</name>
    <name type="ordered locus">Strop_1235</name>
</gene>
<reference key="1">
    <citation type="journal article" date="2007" name="Proc. Natl. Acad. Sci. U.S.A.">
        <title>Genome sequencing reveals complex secondary metabolome in the marine actinomycete Salinispora tropica.</title>
        <authorList>
            <person name="Udwary D.W."/>
            <person name="Zeigler L."/>
            <person name="Asolkar R.N."/>
            <person name="Singan V."/>
            <person name="Lapidus A."/>
            <person name="Fenical W."/>
            <person name="Jensen P.R."/>
            <person name="Moore B.S."/>
        </authorList>
    </citation>
    <scope>NUCLEOTIDE SEQUENCE [LARGE SCALE GENOMIC DNA]</scope>
    <source>
        <strain>ATCC BAA-916 / DSM 44818 / JCM 13857 / NBRC 105044 / CNB-440</strain>
    </source>
</reference>
<feature type="chain" id="PRO_1000080645" description="Ketol-acid reductoisomerase (NADP(+))">
    <location>
        <begin position="1"/>
        <end position="337"/>
    </location>
</feature>
<feature type="domain" description="KARI N-terminal Rossmann" evidence="2">
    <location>
        <begin position="3"/>
        <end position="183"/>
    </location>
</feature>
<feature type="domain" description="KARI C-terminal knotted" evidence="3">
    <location>
        <begin position="184"/>
        <end position="329"/>
    </location>
</feature>
<feature type="active site" evidence="1">
    <location>
        <position position="109"/>
    </location>
</feature>
<feature type="binding site" evidence="1">
    <location>
        <begin position="26"/>
        <end position="29"/>
    </location>
    <ligand>
        <name>NADP(+)</name>
        <dbReference type="ChEBI" id="CHEBI:58349"/>
    </ligand>
</feature>
<feature type="binding site" evidence="1">
    <location>
        <position position="52"/>
    </location>
    <ligand>
        <name>NADP(+)</name>
        <dbReference type="ChEBI" id="CHEBI:58349"/>
    </ligand>
</feature>
<feature type="binding site" evidence="1">
    <location>
        <position position="54"/>
    </location>
    <ligand>
        <name>NADP(+)</name>
        <dbReference type="ChEBI" id="CHEBI:58349"/>
    </ligand>
</feature>
<feature type="binding site" evidence="1">
    <location>
        <begin position="84"/>
        <end position="87"/>
    </location>
    <ligand>
        <name>NADP(+)</name>
        <dbReference type="ChEBI" id="CHEBI:58349"/>
    </ligand>
</feature>
<feature type="binding site" evidence="1">
    <location>
        <position position="135"/>
    </location>
    <ligand>
        <name>NADP(+)</name>
        <dbReference type="ChEBI" id="CHEBI:58349"/>
    </ligand>
</feature>
<feature type="binding site" evidence="1">
    <location>
        <position position="192"/>
    </location>
    <ligand>
        <name>Mg(2+)</name>
        <dbReference type="ChEBI" id="CHEBI:18420"/>
        <label>1</label>
    </ligand>
</feature>
<feature type="binding site" evidence="1">
    <location>
        <position position="192"/>
    </location>
    <ligand>
        <name>Mg(2+)</name>
        <dbReference type="ChEBI" id="CHEBI:18420"/>
        <label>2</label>
    </ligand>
</feature>
<feature type="binding site" evidence="1">
    <location>
        <position position="196"/>
    </location>
    <ligand>
        <name>Mg(2+)</name>
        <dbReference type="ChEBI" id="CHEBI:18420"/>
        <label>1</label>
    </ligand>
</feature>
<feature type="binding site" evidence="1">
    <location>
        <position position="228"/>
    </location>
    <ligand>
        <name>Mg(2+)</name>
        <dbReference type="ChEBI" id="CHEBI:18420"/>
        <label>2</label>
    </ligand>
</feature>
<feature type="binding site" evidence="1">
    <location>
        <position position="232"/>
    </location>
    <ligand>
        <name>Mg(2+)</name>
        <dbReference type="ChEBI" id="CHEBI:18420"/>
        <label>2</label>
    </ligand>
</feature>
<feature type="binding site" evidence="1">
    <location>
        <position position="253"/>
    </location>
    <ligand>
        <name>substrate</name>
    </ligand>
</feature>
<proteinExistence type="inferred from homology"/>
<organism>
    <name type="scientific">Salinispora tropica (strain ATCC BAA-916 / DSM 44818 / JCM 13857 / NBRC 105044 / CNB-440)</name>
    <dbReference type="NCBI Taxonomy" id="369723"/>
    <lineage>
        <taxon>Bacteria</taxon>
        <taxon>Bacillati</taxon>
        <taxon>Actinomycetota</taxon>
        <taxon>Actinomycetes</taxon>
        <taxon>Micromonosporales</taxon>
        <taxon>Micromonosporaceae</taxon>
        <taxon>Salinispora</taxon>
    </lineage>
</organism>
<keyword id="KW-0028">Amino-acid biosynthesis</keyword>
<keyword id="KW-0100">Branched-chain amino acid biosynthesis</keyword>
<keyword id="KW-0460">Magnesium</keyword>
<keyword id="KW-0479">Metal-binding</keyword>
<keyword id="KW-0521">NADP</keyword>
<keyword id="KW-0560">Oxidoreductase</keyword>
<keyword id="KW-1185">Reference proteome</keyword>
<comment type="function">
    <text evidence="1">Involved in the biosynthesis of branched-chain amino acids (BCAA). Catalyzes an alkyl-migration followed by a ketol-acid reduction of (S)-2-acetolactate (S2AL) to yield (R)-2,3-dihydroxy-isovalerate. In the isomerase reaction, S2AL is rearranged via a Mg-dependent methyl migration to produce 3-hydroxy-3-methyl-2-ketobutyrate (HMKB). In the reductase reaction, this 2-ketoacid undergoes a metal-dependent reduction by NADPH to yield (R)-2,3-dihydroxy-isovalerate.</text>
</comment>
<comment type="catalytic activity">
    <reaction evidence="1">
        <text>(2R)-2,3-dihydroxy-3-methylbutanoate + NADP(+) = (2S)-2-acetolactate + NADPH + H(+)</text>
        <dbReference type="Rhea" id="RHEA:22068"/>
        <dbReference type="ChEBI" id="CHEBI:15378"/>
        <dbReference type="ChEBI" id="CHEBI:49072"/>
        <dbReference type="ChEBI" id="CHEBI:57783"/>
        <dbReference type="ChEBI" id="CHEBI:58349"/>
        <dbReference type="ChEBI" id="CHEBI:58476"/>
        <dbReference type="EC" id="1.1.1.86"/>
    </reaction>
</comment>
<comment type="catalytic activity">
    <reaction evidence="1">
        <text>(2R,3R)-2,3-dihydroxy-3-methylpentanoate + NADP(+) = (S)-2-ethyl-2-hydroxy-3-oxobutanoate + NADPH + H(+)</text>
        <dbReference type="Rhea" id="RHEA:13493"/>
        <dbReference type="ChEBI" id="CHEBI:15378"/>
        <dbReference type="ChEBI" id="CHEBI:49256"/>
        <dbReference type="ChEBI" id="CHEBI:49258"/>
        <dbReference type="ChEBI" id="CHEBI:57783"/>
        <dbReference type="ChEBI" id="CHEBI:58349"/>
        <dbReference type="EC" id="1.1.1.86"/>
    </reaction>
</comment>
<comment type="cofactor">
    <cofactor evidence="1">
        <name>Mg(2+)</name>
        <dbReference type="ChEBI" id="CHEBI:18420"/>
    </cofactor>
    <text evidence="1">Binds 2 magnesium ions per subunit.</text>
</comment>
<comment type="pathway">
    <text evidence="1">Amino-acid biosynthesis; L-isoleucine biosynthesis; L-isoleucine from 2-oxobutanoate: step 2/4.</text>
</comment>
<comment type="pathway">
    <text evidence="1">Amino-acid biosynthesis; L-valine biosynthesis; L-valine from pyruvate: step 2/4.</text>
</comment>
<comment type="similarity">
    <text evidence="1">Belongs to the ketol-acid reductoisomerase family.</text>
</comment>
<name>ILVC_SALTO</name>
<protein>
    <recommendedName>
        <fullName evidence="1">Ketol-acid reductoisomerase (NADP(+))</fullName>
        <shortName evidence="1">KARI</shortName>
        <ecNumber evidence="1">1.1.1.86</ecNumber>
    </recommendedName>
    <alternativeName>
        <fullName evidence="1">Acetohydroxy-acid isomeroreductase</fullName>
        <shortName evidence="1">AHIR</shortName>
    </alternativeName>
    <alternativeName>
        <fullName evidence="1">Alpha-keto-beta-hydroxylacyl reductoisomerase</fullName>
    </alternativeName>
    <alternativeName>
        <fullName evidence="1">Ketol-acid reductoisomerase type 1</fullName>
    </alternativeName>
    <alternativeName>
        <fullName evidence="1">Ketol-acid reductoisomerase type I</fullName>
    </alternativeName>
</protein>